<name>RS13_ACHLI</name>
<organism>
    <name type="scientific">Acholeplasma laidlawii (strain PG-8A)</name>
    <dbReference type="NCBI Taxonomy" id="441768"/>
    <lineage>
        <taxon>Bacteria</taxon>
        <taxon>Bacillati</taxon>
        <taxon>Mycoplasmatota</taxon>
        <taxon>Mollicutes</taxon>
        <taxon>Acholeplasmatales</taxon>
        <taxon>Acholeplasmataceae</taxon>
        <taxon>Acholeplasma</taxon>
    </lineage>
</organism>
<comment type="function">
    <text evidence="1">Located at the top of the head of the 30S subunit, it contacts several helices of the 16S rRNA. In the 70S ribosome it contacts the 23S rRNA (bridge B1a) and protein L5 of the 50S subunit (bridge B1b), connecting the 2 subunits; these bridges are implicated in subunit movement. Contacts the tRNAs in the A and P-sites.</text>
</comment>
<comment type="subunit">
    <text evidence="1">Part of the 30S ribosomal subunit. Forms a loose heterodimer with protein S19. Forms two bridges to the 50S subunit in the 70S ribosome.</text>
</comment>
<comment type="similarity">
    <text evidence="1">Belongs to the universal ribosomal protein uS13 family.</text>
</comment>
<keyword id="KW-1185">Reference proteome</keyword>
<keyword id="KW-0687">Ribonucleoprotein</keyword>
<keyword id="KW-0689">Ribosomal protein</keyword>
<keyword id="KW-0694">RNA-binding</keyword>
<keyword id="KW-0699">rRNA-binding</keyword>
<keyword id="KW-0820">tRNA-binding</keyword>
<evidence type="ECO:0000255" key="1">
    <source>
        <dbReference type="HAMAP-Rule" id="MF_01315"/>
    </source>
</evidence>
<evidence type="ECO:0000256" key="2">
    <source>
        <dbReference type="SAM" id="MobiDB-lite"/>
    </source>
</evidence>
<evidence type="ECO:0000305" key="3"/>
<gene>
    <name evidence="1" type="primary">rpsM</name>
    <name type="ordered locus">ACL_0112</name>
</gene>
<sequence length="124" mass="13752">MARIAGVDIPTQKRVVISLQYIYGIGQTTAQEVLKNANVSEDIRVKDLNDDQLSAIRGEVAKIVTEGDLRRESTLNIKRLMEIGSYRGIRHRKGLPVNGQNTRNNARTRKGKPKAVTGKKQAGK</sequence>
<accession>A9NEF8</accession>
<dbReference type="EMBL" id="CP000896">
    <property type="protein sequence ID" value="ABX80738.1"/>
    <property type="molecule type" value="Genomic_DNA"/>
</dbReference>
<dbReference type="RefSeq" id="WP_012242069.1">
    <property type="nucleotide sequence ID" value="NC_010163.1"/>
</dbReference>
<dbReference type="SMR" id="A9NEF8"/>
<dbReference type="STRING" id="441768.ACL_0112"/>
<dbReference type="GeneID" id="41338314"/>
<dbReference type="KEGG" id="acl:ACL_0112"/>
<dbReference type="eggNOG" id="COG0099">
    <property type="taxonomic scope" value="Bacteria"/>
</dbReference>
<dbReference type="HOGENOM" id="CLU_103849_1_1_14"/>
<dbReference type="OrthoDB" id="9803610at2"/>
<dbReference type="Proteomes" id="UP000008558">
    <property type="component" value="Chromosome"/>
</dbReference>
<dbReference type="GO" id="GO:0005829">
    <property type="term" value="C:cytosol"/>
    <property type="evidence" value="ECO:0007669"/>
    <property type="project" value="TreeGrafter"/>
</dbReference>
<dbReference type="GO" id="GO:0015935">
    <property type="term" value="C:small ribosomal subunit"/>
    <property type="evidence" value="ECO:0007669"/>
    <property type="project" value="TreeGrafter"/>
</dbReference>
<dbReference type="GO" id="GO:0019843">
    <property type="term" value="F:rRNA binding"/>
    <property type="evidence" value="ECO:0007669"/>
    <property type="project" value="UniProtKB-UniRule"/>
</dbReference>
<dbReference type="GO" id="GO:0003735">
    <property type="term" value="F:structural constituent of ribosome"/>
    <property type="evidence" value="ECO:0007669"/>
    <property type="project" value="InterPro"/>
</dbReference>
<dbReference type="GO" id="GO:0000049">
    <property type="term" value="F:tRNA binding"/>
    <property type="evidence" value="ECO:0007669"/>
    <property type="project" value="UniProtKB-UniRule"/>
</dbReference>
<dbReference type="GO" id="GO:0006412">
    <property type="term" value="P:translation"/>
    <property type="evidence" value="ECO:0007669"/>
    <property type="project" value="UniProtKB-UniRule"/>
</dbReference>
<dbReference type="FunFam" id="1.10.8.50:FF:000001">
    <property type="entry name" value="30S ribosomal protein S13"/>
    <property type="match status" value="1"/>
</dbReference>
<dbReference type="FunFam" id="4.10.910.10:FF:000001">
    <property type="entry name" value="30S ribosomal protein S13"/>
    <property type="match status" value="1"/>
</dbReference>
<dbReference type="Gene3D" id="1.10.8.50">
    <property type="match status" value="1"/>
</dbReference>
<dbReference type="Gene3D" id="4.10.910.10">
    <property type="entry name" value="30s ribosomal protein s13, domain 2"/>
    <property type="match status" value="1"/>
</dbReference>
<dbReference type="HAMAP" id="MF_01315">
    <property type="entry name" value="Ribosomal_uS13"/>
    <property type="match status" value="1"/>
</dbReference>
<dbReference type="InterPro" id="IPR027437">
    <property type="entry name" value="Rbsml_uS13_C"/>
</dbReference>
<dbReference type="InterPro" id="IPR001892">
    <property type="entry name" value="Ribosomal_uS13"/>
</dbReference>
<dbReference type="InterPro" id="IPR010979">
    <property type="entry name" value="Ribosomal_uS13-like_H2TH"/>
</dbReference>
<dbReference type="InterPro" id="IPR019980">
    <property type="entry name" value="Ribosomal_uS13_bac-type"/>
</dbReference>
<dbReference type="InterPro" id="IPR018269">
    <property type="entry name" value="Ribosomal_uS13_CS"/>
</dbReference>
<dbReference type="NCBIfam" id="TIGR03631">
    <property type="entry name" value="uS13_bact"/>
    <property type="match status" value="1"/>
</dbReference>
<dbReference type="PANTHER" id="PTHR10871">
    <property type="entry name" value="30S RIBOSOMAL PROTEIN S13/40S RIBOSOMAL PROTEIN S18"/>
    <property type="match status" value="1"/>
</dbReference>
<dbReference type="PANTHER" id="PTHR10871:SF1">
    <property type="entry name" value="SMALL RIBOSOMAL SUBUNIT PROTEIN US13M"/>
    <property type="match status" value="1"/>
</dbReference>
<dbReference type="Pfam" id="PF00416">
    <property type="entry name" value="Ribosomal_S13"/>
    <property type="match status" value="1"/>
</dbReference>
<dbReference type="PIRSF" id="PIRSF002134">
    <property type="entry name" value="Ribosomal_S13"/>
    <property type="match status" value="1"/>
</dbReference>
<dbReference type="SUPFAM" id="SSF46946">
    <property type="entry name" value="S13-like H2TH domain"/>
    <property type="match status" value="1"/>
</dbReference>
<dbReference type="PROSITE" id="PS00646">
    <property type="entry name" value="RIBOSOMAL_S13_1"/>
    <property type="match status" value="1"/>
</dbReference>
<dbReference type="PROSITE" id="PS50159">
    <property type="entry name" value="RIBOSOMAL_S13_2"/>
    <property type="match status" value="1"/>
</dbReference>
<protein>
    <recommendedName>
        <fullName evidence="1">Small ribosomal subunit protein uS13</fullName>
    </recommendedName>
    <alternativeName>
        <fullName evidence="3">30S ribosomal protein S13</fullName>
    </alternativeName>
</protein>
<proteinExistence type="inferred from homology"/>
<feature type="chain" id="PRO_1000086226" description="Small ribosomal subunit protein uS13">
    <location>
        <begin position="1"/>
        <end position="124"/>
    </location>
</feature>
<feature type="region of interest" description="Disordered" evidence="2">
    <location>
        <begin position="91"/>
        <end position="124"/>
    </location>
</feature>
<reference key="1">
    <citation type="journal article" date="2011" name="J. Bacteriol.">
        <title>Complete genome and proteome of Acholeplasma laidlawii.</title>
        <authorList>
            <person name="Lazarev V.N."/>
            <person name="Levitskii S.A."/>
            <person name="Basovskii Y.I."/>
            <person name="Chukin M.M."/>
            <person name="Akopian T.A."/>
            <person name="Vereshchagin V.V."/>
            <person name="Kostrjukova E.S."/>
            <person name="Kovaleva G.Y."/>
            <person name="Kazanov M.D."/>
            <person name="Malko D.B."/>
            <person name="Vitreschak A.G."/>
            <person name="Sernova N.V."/>
            <person name="Gelfand M.S."/>
            <person name="Demina I.A."/>
            <person name="Serebryakova M.V."/>
            <person name="Galyamina M.A."/>
            <person name="Vtyurin N.N."/>
            <person name="Rogov S.I."/>
            <person name="Alexeev D.G."/>
            <person name="Ladygina V.G."/>
            <person name="Govorun V.M."/>
        </authorList>
    </citation>
    <scope>NUCLEOTIDE SEQUENCE [LARGE SCALE GENOMIC DNA]</scope>
    <source>
        <strain>PG-8A</strain>
    </source>
</reference>